<sequence length="149" mass="17205">MHCPFCAAVDTKVIDSRLVSDGSQVRRRRQCLDCNERFTTFEVAELVLPRVIKSDEVREPFNEEKLRRGMLKALEKRPVSSDDVETAISHIKSQLRATGEREVPTKMVGNLVMEALKRLDKVAYIRFASVYRSFEDVREFGEEIARLQD</sequence>
<name>NRDR_YERP3</name>
<protein>
    <recommendedName>
        <fullName evidence="1">Transcriptional repressor NrdR</fullName>
    </recommendedName>
</protein>
<feature type="chain" id="PRO_1000080856" description="Transcriptional repressor NrdR">
    <location>
        <begin position="1"/>
        <end position="149"/>
    </location>
</feature>
<feature type="domain" description="ATP-cone" evidence="1">
    <location>
        <begin position="49"/>
        <end position="139"/>
    </location>
</feature>
<feature type="zinc finger region" evidence="1">
    <location>
        <begin position="3"/>
        <end position="34"/>
    </location>
</feature>
<organism>
    <name type="scientific">Yersinia pseudotuberculosis serotype O:1b (strain IP 31758)</name>
    <dbReference type="NCBI Taxonomy" id="349747"/>
    <lineage>
        <taxon>Bacteria</taxon>
        <taxon>Pseudomonadati</taxon>
        <taxon>Pseudomonadota</taxon>
        <taxon>Gammaproteobacteria</taxon>
        <taxon>Enterobacterales</taxon>
        <taxon>Yersiniaceae</taxon>
        <taxon>Yersinia</taxon>
    </lineage>
</organism>
<dbReference type="EMBL" id="CP000720">
    <property type="protein sequence ID" value="ABS48404.1"/>
    <property type="molecule type" value="Genomic_DNA"/>
</dbReference>
<dbReference type="RefSeq" id="WP_002208668.1">
    <property type="nucleotide sequence ID" value="NC_009708.1"/>
</dbReference>
<dbReference type="SMR" id="A7FLF0"/>
<dbReference type="GeneID" id="57975529"/>
<dbReference type="KEGG" id="ypi:YpsIP31758_3118"/>
<dbReference type="HOGENOM" id="CLU_108412_0_0_6"/>
<dbReference type="Proteomes" id="UP000002412">
    <property type="component" value="Chromosome"/>
</dbReference>
<dbReference type="GO" id="GO:0005524">
    <property type="term" value="F:ATP binding"/>
    <property type="evidence" value="ECO:0007669"/>
    <property type="project" value="UniProtKB-KW"/>
</dbReference>
<dbReference type="GO" id="GO:0003677">
    <property type="term" value="F:DNA binding"/>
    <property type="evidence" value="ECO:0007669"/>
    <property type="project" value="UniProtKB-KW"/>
</dbReference>
<dbReference type="GO" id="GO:0008270">
    <property type="term" value="F:zinc ion binding"/>
    <property type="evidence" value="ECO:0007669"/>
    <property type="project" value="UniProtKB-UniRule"/>
</dbReference>
<dbReference type="GO" id="GO:0045892">
    <property type="term" value="P:negative regulation of DNA-templated transcription"/>
    <property type="evidence" value="ECO:0007669"/>
    <property type="project" value="UniProtKB-UniRule"/>
</dbReference>
<dbReference type="HAMAP" id="MF_00440">
    <property type="entry name" value="NrdR"/>
    <property type="match status" value="1"/>
</dbReference>
<dbReference type="InterPro" id="IPR005144">
    <property type="entry name" value="ATP-cone_dom"/>
</dbReference>
<dbReference type="InterPro" id="IPR055173">
    <property type="entry name" value="NrdR-like_N"/>
</dbReference>
<dbReference type="InterPro" id="IPR003796">
    <property type="entry name" value="RNR_NrdR-like"/>
</dbReference>
<dbReference type="NCBIfam" id="TIGR00244">
    <property type="entry name" value="transcriptional regulator NrdR"/>
    <property type="match status" value="1"/>
</dbReference>
<dbReference type="PANTHER" id="PTHR30455">
    <property type="entry name" value="TRANSCRIPTIONAL REPRESSOR NRDR"/>
    <property type="match status" value="1"/>
</dbReference>
<dbReference type="PANTHER" id="PTHR30455:SF2">
    <property type="entry name" value="TRANSCRIPTIONAL REPRESSOR NRDR"/>
    <property type="match status" value="1"/>
</dbReference>
<dbReference type="Pfam" id="PF03477">
    <property type="entry name" value="ATP-cone"/>
    <property type="match status" value="1"/>
</dbReference>
<dbReference type="Pfam" id="PF22811">
    <property type="entry name" value="Zn_ribbon_NrdR"/>
    <property type="match status" value="1"/>
</dbReference>
<dbReference type="PROSITE" id="PS51161">
    <property type="entry name" value="ATP_CONE"/>
    <property type="match status" value="1"/>
</dbReference>
<proteinExistence type="inferred from homology"/>
<reference key="1">
    <citation type="journal article" date="2007" name="PLoS Genet.">
        <title>The complete genome sequence of Yersinia pseudotuberculosis IP31758, the causative agent of Far East scarlet-like fever.</title>
        <authorList>
            <person name="Eppinger M."/>
            <person name="Rosovitz M.J."/>
            <person name="Fricke W.F."/>
            <person name="Rasko D.A."/>
            <person name="Kokorina G."/>
            <person name="Fayolle C."/>
            <person name="Lindler L.E."/>
            <person name="Carniel E."/>
            <person name="Ravel J."/>
        </authorList>
    </citation>
    <scope>NUCLEOTIDE SEQUENCE [LARGE SCALE GENOMIC DNA]</scope>
    <source>
        <strain>IP 31758</strain>
    </source>
</reference>
<accession>A7FLF0</accession>
<gene>
    <name evidence="1" type="primary">nrdR</name>
    <name type="ordered locus">YpsIP31758_3118</name>
</gene>
<keyword id="KW-0067">ATP-binding</keyword>
<keyword id="KW-0238">DNA-binding</keyword>
<keyword id="KW-0479">Metal-binding</keyword>
<keyword id="KW-0547">Nucleotide-binding</keyword>
<keyword id="KW-0678">Repressor</keyword>
<keyword id="KW-0804">Transcription</keyword>
<keyword id="KW-0805">Transcription regulation</keyword>
<keyword id="KW-0862">Zinc</keyword>
<keyword id="KW-0863">Zinc-finger</keyword>
<evidence type="ECO:0000255" key="1">
    <source>
        <dbReference type="HAMAP-Rule" id="MF_00440"/>
    </source>
</evidence>
<comment type="function">
    <text evidence="1">Negatively regulates transcription of bacterial ribonucleotide reductase nrd genes and operons by binding to NrdR-boxes.</text>
</comment>
<comment type="cofactor">
    <cofactor evidence="1">
        <name>Zn(2+)</name>
        <dbReference type="ChEBI" id="CHEBI:29105"/>
    </cofactor>
    <text evidence="1">Binds 1 zinc ion.</text>
</comment>
<comment type="similarity">
    <text evidence="1">Belongs to the NrdR family.</text>
</comment>